<feature type="chain" id="PRO_0000111127" description="Small ribosomal subunit protein bS18">
    <location>
        <begin position="1"/>
        <end position="79"/>
    </location>
</feature>
<dbReference type="EMBL" id="BA000040">
    <property type="protein sequence ID" value="BAC49343.1"/>
    <property type="molecule type" value="Genomic_DNA"/>
</dbReference>
<dbReference type="RefSeq" id="NP_770718.1">
    <property type="nucleotide sequence ID" value="NC_004463.1"/>
</dbReference>
<dbReference type="RefSeq" id="WP_007592020.1">
    <property type="nucleotide sequence ID" value="NZ_CP011360.1"/>
</dbReference>
<dbReference type="SMR" id="Q89MW4"/>
<dbReference type="FunCoup" id="Q89MW4">
    <property type="interactions" value="748"/>
</dbReference>
<dbReference type="STRING" id="224911.AAV28_17420"/>
<dbReference type="EnsemblBacteria" id="BAC49343">
    <property type="protein sequence ID" value="BAC49343"/>
    <property type="gene ID" value="BAC49343"/>
</dbReference>
<dbReference type="GeneID" id="93211904"/>
<dbReference type="KEGG" id="bja:bsl4078"/>
<dbReference type="PATRIC" id="fig|224911.44.peg.3784"/>
<dbReference type="eggNOG" id="COG0238">
    <property type="taxonomic scope" value="Bacteria"/>
</dbReference>
<dbReference type="HOGENOM" id="CLU_148710_2_3_5"/>
<dbReference type="InParanoid" id="Q89MW4"/>
<dbReference type="OrthoDB" id="9812008at2"/>
<dbReference type="PhylomeDB" id="Q89MW4"/>
<dbReference type="PRO" id="PR:Q89MW4"/>
<dbReference type="Proteomes" id="UP000002526">
    <property type="component" value="Chromosome"/>
</dbReference>
<dbReference type="GO" id="GO:0022627">
    <property type="term" value="C:cytosolic small ribosomal subunit"/>
    <property type="evidence" value="ECO:0000318"/>
    <property type="project" value="GO_Central"/>
</dbReference>
<dbReference type="GO" id="GO:0070181">
    <property type="term" value="F:small ribosomal subunit rRNA binding"/>
    <property type="evidence" value="ECO:0000318"/>
    <property type="project" value="GO_Central"/>
</dbReference>
<dbReference type="GO" id="GO:0003735">
    <property type="term" value="F:structural constituent of ribosome"/>
    <property type="evidence" value="ECO:0000318"/>
    <property type="project" value="GO_Central"/>
</dbReference>
<dbReference type="GO" id="GO:0006412">
    <property type="term" value="P:translation"/>
    <property type="evidence" value="ECO:0000318"/>
    <property type="project" value="GO_Central"/>
</dbReference>
<dbReference type="FunFam" id="4.10.640.10:FF:000006">
    <property type="entry name" value="30S ribosomal protein S18"/>
    <property type="match status" value="1"/>
</dbReference>
<dbReference type="Gene3D" id="4.10.640.10">
    <property type="entry name" value="Ribosomal protein S18"/>
    <property type="match status" value="1"/>
</dbReference>
<dbReference type="HAMAP" id="MF_00270">
    <property type="entry name" value="Ribosomal_bS18"/>
    <property type="match status" value="1"/>
</dbReference>
<dbReference type="InterPro" id="IPR001648">
    <property type="entry name" value="Ribosomal_bS18"/>
</dbReference>
<dbReference type="InterPro" id="IPR018275">
    <property type="entry name" value="Ribosomal_bS18_CS"/>
</dbReference>
<dbReference type="InterPro" id="IPR036870">
    <property type="entry name" value="Ribosomal_bS18_sf"/>
</dbReference>
<dbReference type="NCBIfam" id="TIGR00165">
    <property type="entry name" value="S18"/>
    <property type="match status" value="1"/>
</dbReference>
<dbReference type="PANTHER" id="PTHR13479">
    <property type="entry name" value="30S RIBOSOMAL PROTEIN S18"/>
    <property type="match status" value="1"/>
</dbReference>
<dbReference type="PANTHER" id="PTHR13479:SF40">
    <property type="entry name" value="SMALL RIBOSOMAL SUBUNIT PROTEIN BS18M"/>
    <property type="match status" value="1"/>
</dbReference>
<dbReference type="Pfam" id="PF01084">
    <property type="entry name" value="Ribosomal_S18"/>
    <property type="match status" value="1"/>
</dbReference>
<dbReference type="PRINTS" id="PR00974">
    <property type="entry name" value="RIBOSOMALS18"/>
</dbReference>
<dbReference type="SUPFAM" id="SSF46911">
    <property type="entry name" value="Ribosomal protein S18"/>
    <property type="match status" value="1"/>
</dbReference>
<dbReference type="PROSITE" id="PS00057">
    <property type="entry name" value="RIBOSOMAL_S18"/>
    <property type="match status" value="1"/>
</dbReference>
<accession>Q89MW4</accession>
<name>RS18_BRADU</name>
<gene>
    <name evidence="1" type="primary">rpsR</name>
    <name type="ordered locus">bsl4078</name>
</gene>
<comment type="function">
    <text evidence="1">Binds as a heterodimer with protein bS6 to the central domain of the 16S rRNA, where it helps stabilize the platform of the 30S subunit.</text>
</comment>
<comment type="subunit">
    <text evidence="1">Part of the 30S ribosomal subunit. Forms a tight heterodimer with protein bS6.</text>
</comment>
<comment type="similarity">
    <text evidence="1">Belongs to the bacterial ribosomal protein bS18 family.</text>
</comment>
<protein>
    <recommendedName>
        <fullName evidence="1">Small ribosomal subunit protein bS18</fullName>
    </recommendedName>
    <alternativeName>
        <fullName evidence="2">30S ribosomal protein S18</fullName>
    </alternativeName>
</protein>
<keyword id="KW-1185">Reference proteome</keyword>
<keyword id="KW-0687">Ribonucleoprotein</keyword>
<keyword id="KW-0689">Ribosomal protein</keyword>
<keyword id="KW-0694">RNA-binding</keyword>
<keyword id="KW-0699">rRNA-binding</keyword>
<organism>
    <name type="scientific">Bradyrhizobium diazoefficiens (strain JCM 10833 / BCRC 13528 / IAM 13628 / NBRC 14792 / USDA 110)</name>
    <dbReference type="NCBI Taxonomy" id="224911"/>
    <lineage>
        <taxon>Bacteria</taxon>
        <taxon>Pseudomonadati</taxon>
        <taxon>Pseudomonadota</taxon>
        <taxon>Alphaproteobacteria</taxon>
        <taxon>Hyphomicrobiales</taxon>
        <taxon>Nitrobacteraceae</taxon>
        <taxon>Bradyrhizobium</taxon>
    </lineage>
</organism>
<evidence type="ECO:0000255" key="1">
    <source>
        <dbReference type="HAMAP-Rule" id="MF_00270"/>
    </source>
</evidence>
<evidence type="ECO:0000305" key="2"/>
<proteinExistence type="inferred from homology"/>
<sequence>MAEAGARRPFFRRRKSCPFTGANAPKIDYKDSKLLMRYVSERGKIVPSRITAVSAKKQRELARAIKRARFLGLLPYVIR</sequence>
<reference key="1">
    <citation type="journal article" date="2002" name="DNA Res.">
        <title>Complete genomic sequence of nitrogen-fixing symbiotic bacterium Bradyrhizobium japonicum USDA110.</title>
        <authorList>
            <person name="Kaneko T."/>
            <person name="Nakamura Y."/>
            <person name="Sato S."/>
            <person name="Minamisawa K."/>
            <person name="Uchiumi T."/>
            <person name="Sasamoto S."/>
            <person name="Watanabe A."/>
            <person name="Idesawa K."/>
            <person name="Iriguchi M."/>
            <person name="Kawashima K."/>
            <person name="Kohara M."/>
            <person name="Matsumoto M."/>
            <person name="Shimpo S."/>
            <person name="Tsuruoka H."/>
            <person name="Wada T."/>
            <person name="Yamada M."/>
            <person name="Tabata S."/>
        </authorList>
    </citation>
    <scope>NUCLEOTIDE SEQUENCE [LARGE SCALE GENOMIC DNA]</scope>
    <source>
        <strain>JCM 10833 / BCRC 13528 / IAM 13628 / NBRC 14792 / USDA 110</strain>
    </source>
</reference>